<evidence type="ECO:0000250" key="1">
    <source>
        <dbReference type="UniProtKB" id="C0HJB1"/>
    </source>
</evidence>
<evidence type="ECO:0000269" key="2">
    <source ref="1"/>
</evidence>
<evidence type="ECO:0000312" key="3">
    <source>
        <dbReference type="PDB" id="6NK9"/>
    </source>
</evidence>
<evidence type="ECO:0007744" key="4">
    <source>
        <dbReference type="PDB" id="6NK9"/>
    </source>
</evidence>
<name>ACTX1_ANTCS</name>
<dbReference type="PDB" id="6NK9">
    <property type="method" value="NMR"/>
    <property type="chains" value="A=1-32"/>
</dbReference>
<dbReference type="PDBsum" id="6NK9"/>
<dbReference type="SMR" id="A0A6I8WFP9"/>
<dbReference type="GO" id="GO:0005576">
    <property type="term" value="C:extracellular region"/>
    <property type="evidence" value="ECO:0007669"/>
    <property type="project" value="UniProtKB-SubCell"/>
</dbReference>
<dbReference type="GO" id="GO:0042151">
    <property type="term" value="C:nematocyst"/>
    <property type="evidence" value="ECO:0007669"/>
    <property type="project" value="UniProtKB-SubCell"/>
</dbReference>
<dbReference type="GO" id="GO:0099106">
    <property type="term" value="F:ion channel regulator activity"/>
    <property type="evidence" value="ECO:0007669"/>
    <property type="project" value="UniProtKB-KW"/>
</dbReference>
<dbReference type="GO" id="GO:0090729">
    <property type="term" value="F:toxin activity"/>
    <property type="evidence" value="ECO:0007669"/>
    <property type="project" value="UniProtKB-KW"/>
</dbReference>
<protein>
    <recommendedName>
        <fullName evidence="3">Acatoxin 1</fullName>
        <shortName evidence="3">Acatx1</shortName>
    </recommendedName>
</protein>
<sequence length="32" mass="3343">CGGAGAKCSTKSDCCSGLWCSGSGHCYHRRYT</sequence>
<accession>A0A6I8WFP9</accession>
<comment type="function">
    <text evidence="1">Reversibly inhibits acid-sensing ion channels (ASIC) in rat dorsal root ganglia neurons. Reversibly inhibits voltage-gated potassium channels (Kv) in rat DRG neurons.</text>
</comment>
<comment type="subcellular location">
    <subcellularLocation>
        <location evidence="1">Secreted</location>
    </subcellularLocation>
    <subcellularLocation>
        <location evidence="1">Nematocyst</location>
    </subcellularLocation>
</comment>
<keyword id="KW-0002">3D-structure</keyword>
<keyword id="KW-1015">Disulfide bond</keyword>
<keyword id="KW-0872">Ion channel impairing toxin</keyword>
<keyword id="KW-0166">Nematocyst</keyword>
<keyword id="KW-0528">Neurotoxin</keyword>
<keyword id="KW-1275">Proton-gated sodium channel impairing toxin</keyword>
<keyword id="KW-0964">Secreted</keyword>
<keyword id="KW-0800">Toxin</keyword>
<feature type="chain" id="PRO_0000452543" description="Acatoxin 1" evidence="2">
    <location>
        <begin position="1"/>
        <end position="32"/>
    </location>
</feature>
<feature type="disulfide bond" evidence="4">
    <location>
        <begin position="1"/>
        <end position="15"/>
    </location>
</feature>
<feature type="disulfide bond" evidence="4">
    <location>
        <begin position="8"/>
        <end position="20"/>
    </location>
</feature>
<feature type="disulfide bond" evidence="4">
    <location>
        <begin position="14"/>
        <end position="26"/>
    </location>
</feature>
<reference evidence="3" key="1">
    <citation type="submission" date="2019-01" db="PDB data bank">
        <title>Structural features of potassium channel inhibition by Acatx1, a novel sea anemone neurotoxin.</title>
        <authorList>
            <person name="Amorim G.C."/>
            <person name="Almeida F.C.L."/>
            <person name="Madio B."/>
        </authorList>
    </citation>
    <scope>STRUCTURE BY NMR</scope>
    <scope>DISULFIDE BOND</scope>
</reference>
<organism>
    <name type="scientific">Anthopleura cascaia</name>
    <name type="common">Sea anemone</name>
    <dbReference type="NCBI Taxonomy" id="2805811"/>
    <lineage>
        <taxon>Eukaryota</taxon>
        <taxon>Metazoa</taxon>
        <taxon>Cnidaria</taxon>
        <taxon>Anthozoa</taxon>
        <taxon>Hexacorallia</taxon>
        <taxon>Actiniaria</taxon>
        <taxon>Actiniidae</taxon>
        <taxon>Anthopleura</taxon>
    </lineage>
</organism>
<proteinExistence type="evidence at protein level"/>